<evidence type="ECO:0000255" key="1">
    <source>
        <dbReference type="HAMAP-Rule" id="MF_00049"/>
    </source>
</evidence>
<feature type="chain" id="PRO_1000074824" description="Leucine--tRNA ligase">
    <location>
        <begin position="1"/>
        <end position="802"/>
    </location>
</feature>
<feature type="short sequence motif" description="'HIGH' region">
    <location>
        <begin position="40"/>
        <end position="51"/>
    </location>
</feature>
<feature type="short sequence motif" description="'KMSKS' region">
    <location>
        <begin position="576"/>
        <end position="580"/>
    </location>
</feature>
<feature type="binding site" evidence="1">
    <location>
        <position position="579"/>
    </location>
    <ligand>
        <name>ATP</name>
        <dbReference type="ChEBI" id="CHEBI:30616"/>
    </ligand>
</feature>
<comment type="catalytic activity">
    <reaction evidence="1">
        <text>tRNA(Leu) + L-leucine + ATP = L-leucyl-tRNA(Leu) + AMP + diphosphate</text>
        <dbReference type="Rhea" id="RHEA:11688"/>
        <dbReference type="Rhea" id="RHEA-COMP:9613"/>
        <dbReference type="Rhea" id="RHEA-COMP:9622"/>
        <dbReference type="ChEBI" id="CHEBI:30616"/>
        <dbReference type="ChEBI" id="CHEBI:33019"/>
        <dbReference type="ChEBI" id="CHEBI:57427"/>
        <dbReference type="ChEBI" id="CHEBI:78442"/>
        <dbReference type="ChEBI" id="CHEBI:78494"/>
        <dbReference type="ChEBI" id="CHEBI:456215"/>
        <dbReference type="EC" id="6.1.1.4"/>
    </reaction>
</comment>
<comment type="subcellular location">
    <subcellularLocation>
        <location evidence="1">Cytoplasm</location>
    </subcellularLocation>
</comment>
<comment type="similarity">
    <text evidence="1">Belongs to the class-I aminoacyl-tRNA synthetase family.</text>
</comment>
<proteinExistence type="inferred from homology"/>
<keyword id="KW-0030">Aminoacyl-tRNA synthetase</keyword>
<keyword id="KW-0067">ATP-binding</keyword>
<keyword id="KW-0963">Cytoplasm</keyword>
<keyword id="KW-0436">Ligase</keyword>
<keyword id="KW-0547">Nucleotide-binding</keyword>
<keyword id="KW-0648">Protein biosynthesis</keyword>
<protein>
    <recommendedName>
        <fullName evidence="1">Leucine--tRNA ligase</fullName>
        <ecNumber evidence="1">6.1.1.4</ecNumber>
    </recommendedName>
    <alternativeName>
        <fullName evidence="1">Leucyl-tRNA synthetase</fullName>
        <shortName evidence="1">LeuRS</shortName>
    </alternativeName>
</protein>
<sequence>MSFNHQEIEKKWQAYWEENKTFRTPDETDKPKFYALDMFPYPSGAGLHVGHPEGYTATDILSRMKRMQGYNVLHPMGWDAFGLPAEQYALDTGNSPAEFTEKNINTFRNQIKSLGFSYDWDREVNTTDPNYYKWTQWIFLKLFEKGLAYVDEIPVNWCPALGTVLANEEVIDGKSERGGHPVERRPMKQWMLKITAYADRLLEDLDELDWPESLKDMQRNWIGRSEGAEVHFNIDGTDKKFTIFTTRPDTLFGATYCVLAPEHALVAEITTEDQKGAVEAYIDVVKSKSDLERTELAKEKTGVFTGAYAINPVNGEKLPIWIADYVLASYGTGAVMAVPAHDERDYEFAKTFDLPMKEVVKGGDITKEAYTADGEHIDSAFLNGLNKEEAIAKMIEWLEVTGAGNQKVTYRLRDWLFSRQRYWGEPIPIIHWEDGTMTAVKEEELPLVLPKTDNIRPSGTGESPLANIDEWVNVVDPETGKKGRRETNTMPQWAGSCWYYLRYIDPNNNEALVDPEKAKQWLPVDIYIGGAEHAVLHLLYARFWHKVLYDIGVVPTKEPFQQLFNQGMILGENNEKMSKSKGNVVNPDDIVASHGADTLRLYEMFMGPLDASIAWSENGLDGARRFLDRVWRLFVQENGELSEKITDAPNKELEKAYHQTVKKVTEDYEELHFNTAISQMMMFINDAYKAETLPKEYVEGFVKLLAPVAPHIAEELWSKLGYNETITYASWPTFDESKLVEDEVEIVVQVMGKVRAKLKMKKDASKEEMEQLALEEVKEQIEGKTVRKVIVVPGKLVNIVAN</sequence>
<reference key="1">
    <citation type="journal article" date="2008" name="Chem. Biol. Interact.">
        <title>Extending the Bacillus cereus group genomics to putative food-borne pathogens of different toxicity.</title>
        <authorList>
            <person name="Lapidus A."/>
            <person name="Goltsman E."/>
            <person name="Auger S."/>
            <person name="Galleron N."/>
            <person name="Segurens B."/>
            <person name="Dossat C."/>
            <person name="Land M.L."/>
            <person name="Broussolle V."/>
            <person name="Brillard J."/>
            <person name="Guinebretiere M.-H."/>
            <person name="Sanchis V."/>
            <person name="Nguen-the C."/>
            <person name="Lereclus D."/>
            <person name="Richardson P."/>
            <person name="Wincker P."/>
            <person name="Weissenbach J."/>
            <person name="Ehrlich S.D."/>
            <person name="Sorokin A."/>
        </authorList>
    </citation>
    <scope>NUCLEOTIDE SEQUENCE [LARGE SCALE GENOMIC DNA]</scope>
    <source>
        <strain>DSM 22905 / CIP 110041 / 391-98 / NVH 391-98</strain>
    </source>
</reference>
<dbReference type="EC" id="6.1.1.4" evidence="1"/>
<dbReference type="EMBL" id="CP000764">
    <property type="protein sequence ID" value="ABS23627.1"/>
    <property type="molecule type" value="Genomic_DNA"/>
</dbReference>
<dbReference type="RefSeq" id="WP_012095876.1">
    <property type="nucleotide sequence ID" value="NC_009674.1"/>
</dbReference>
<dbReference type="SMR" id="A7GU19"/>
<dbReference type="STRING" id="315749.Bcer98_3415"/>
<dbReference type="GeneID" id="33898654"/>
<dbReference type="KEGG" id="bcy:Bcer98_3415"/>
<dbReference type="eggNOG" id="COG0495">
    <property type="taxonomic scope" value="Bacteria"/>
</dbReference>
<dbReference type="HOGENOM" id="CLU_004427_0_0_9"/>
<dbReference type="OrthoDB" id="9810365at2"/>
<dbReference type="Proteomes" id="UP000002300">
    <property type="component" value="Chromosome"/>
</dbReference>
<dbReference type="GO" id="GO:0005829">
    <property type="term" value="C:cytosol"/>
    <property type="evidence" value="ECO:0007669"/>
    <property type="project" value="TreeGrafter"/>
</dbReference>
<dbReference type="GO" id="GO:0002161">
    <property type="term" value="F:aminoacyl-tRNA deacylase activity"/>
    <property type="evidence" value="ECO:0007669"/>
    <property type="project" value="InterPro"/>
</dbReference>
<dbReference type="GO" id="GO:0005524">
    <property type="term" value="F:ATP binding"/>
    <property type="evidence" value="ECO:0007669"/>
    <property type="project" value="UniProtKB-UniRule"/>
</dbReference>
<dbReference type="GO" id="GO:0004823">
    <property type="term" value="F:leucine-tRNA ligase activity"/>
    <property type="evidence" value="ECO:0007669"/>
    <property type="project" value="UniProtKB-UniRule"/>
</dbReference>
<dbReference type="GO" id="GO:0006429">
    <property type="term" value="P:leucyl-tRNA aminoacylation"/>
    <property type="evidence" value="ECO:0007669"/>
    <property type="project" value="UniProtKB-UniRule"/>
</dbReference>
<dbReference type="CDD" id="cd07958">
    <property type="entry name" value="Anticodon_Ia_Leu_BEm"/>
    <property type="match status" value="1"/>
</dbReference>
<dbReference type="CDD" id="cd00812">
    <property type="entry name" value="LeuRS_core"/>
    <property type="match status" value="1"/>
</dbReference>
<dbReference type="FunFam" id="1.10.730.10:FF:000012">
    <property type="entry name" value="Leucine--tRNA ligase"/>
    <property type="match status" value="1"/>
</dbReference>
<dbReference type="FunFam" id="1.10.730.10:FF:000018">
    <property type="entry name" value="Leucine--tRNA ligase"/>
    <property type="match status" value="1"/>
</dbReference>
<dbReference type="FunFam" id="3.10.20.590:FF:000001">
    <property type="entry name" value="Leucine--tRNA ligase"/>
    <property type="match status" value="1"/>
</dbReference>
<dbReference type="FunFam" id="3.40.50.620:FF:000056">
    <property type="entry name" value="Leucine--tRNA ligase"/>
    <property type="match status" value="1"/>
</dbReference>
<dbReference type="FunFam" id="3.40.50.620:FF:000077">
    <property type="entry name" value="Leucine--tRNA ligase"/>
    <property type="match status" value="1"/>
</dbReference>
<dbReference type="FunFam" id="3.90.740.10:FF:000049">
    <property type="entry name" value="Os01g0120300 protein"/>
    <property type="match status" value="1"/>
</dbReference>
<dbReference type="Gene3D" id="3.10.20.590">
    <property type="match status" value="1"/>
</dbReference>
<dbReference type="Gene3D" id="3.40.50.620">
    <property type="entry name" value="HUPs"/>
    <property type="match status" value="2"/>
</dbReference>
<dbReference type="Gene3D" id="1.10.730.10">
    <property type="entry name" value="Isoleucyl-tRNA Synthetase, Domain 1"/>
    <property type="match status" value="1"/>
</dbReference>
<dbReference type="HAMAP" id="MF_00049_B">
    <property type="entry name" value="Leu_tRNA_synth_B"/>
    <property type="match status" value="1"/>
</dbReference>
<dbReference type="InterPro" id="IPR001412">
    <property type="entry name" value="aa-tRNA-synth_I_CS"/>
</dbReference>
<dbReference type="InterPro" id="IPR002300">
    <property type="entry name" value="aa-tRNA-synth_Ia"/>
</dbReference>
<dbReference type="InterPro" id="IPR002302">
    <property type="entry name" value="Leu-tRNA-ligase"/>
</dbReference>
<dbReference type="InterPro" id="IPR025709">
    <property type="entry name" value="Leu_tRNA-synth_edit"/>
</dbReference>
<dbReference type="InterPro" id="IPR013155">
    <property type="entry name" value="M/V/L/I-tRNA-synth_anticd-bd"/>
</dbReference>
<dbReference type="InterPro" id="IPR015413">
    <property type="entry name" value="Methionyl/Leucyl_tRNA_Synth"/>
</dbReference>
<dbReference type="InterPro" id="IPR014729">
    <property type="entry name" value="Rossmann-like_a/b/a_fold"/>
</dbReference>
<dbReference type="InterPro" id="IPR009080">
    <property type="entry name" value="tRNAsynth_Ia_anticodon-bd"/>
</dbReference>
<dbReference type="InterPro" id="IPR009008">
    <property type="entry name" value="Val/Leu/Ile-tRNA-synth_edit"/>
</dbReference>
<dbReference type="NCBIfam" id="TIGR00396">
    <property type="entry name" value="leuS_bact"/>
    <property type="match status" value="1"/>
</dbReference>
<dbReference type="PANTHER" id="PTHR43740:SF2">
    <property type="entry name" value="LEUCINE--TRNA LIGASE, MITOCHONDRIAL"/>
    <property type="match status" value="1"/>
</dbReference>
<dbReference type="PANTHER" id="PTHR43740">
    <property type="entry name" value="LEUCYL-TRNA SYNTHETASE"/>
    <property type="match status" value="1"/>
</dbReference>
<dbReference type="Pfam" id="PF08264">
    <property type="entry name" value="Anticodon_1"/>
    <property type="match status" value="1"/>
</dbReference>
<dbReference type="Pfam" id="PF00133">
    <property type="entry name" value="tRNA-synt_1"/>
    <property type="match status" value="1"/>
</dbReference>
<dbReference type="Pfam" id="PF13603">
    <property type="entry name" value="tRNA-synt_1_2"/>
    <property type="match status" value="1"/>
</dbReference>
<dbReference type="Pfam" id="PF09334">
    <property type="entry name" value="tRNA-synt_1g"/>
    <property type="match status" value="1"/>
</dbReference>
<dbReference type="PRINTS" id="PR00985">
    <property type="entry name" value="TRNASYNTHLEU"/>
</dbReference>
<dbReference type="SUPFAM" id="SSF47323">
    <property type="entry name" value="Anticodon-binding domain of a subclass of class I aminoacyl-tRNA synthetases"/>
    <property type="match status" value="1"/>
</dbReference>
<dbReference type="SUPFAM" id="SSF52374">
    <property type="entry name" value="Nucleotidylyl transferase"/>
    <property type="match status" value="1"/>
</dbReference>
<dbReference type="SUPFAM" id="SSF50677">
    <property type="entry name" value="ValRS/IleRS/LeuRS editing domain"/>
    <property type="match status" value="1"/>
</dbReference>
<dbReference type="PROSITE" id="PS00178">
    <property type="entry name" value="AA_TRNA_LIGASE_I"/>
    <property type="match status" value="1"/>
</dbReference>
<gene>
    <name evidence="1" type="primary">leuS</name>
    <name type="ordered locus">Bcer98_3415</name>
</gene>
<name>SYL_BACCN</name>
<accession>A7GU19</accession>
<organism>
    <name type="scientific">Bacillus cytotoxicus (strain DSM 22905 / CIP 110041 / 391-98 / NVH 391-98)</name>
    <dbReference type="NCBI Taxonomy" id="315749"/>
    <lineage>
        <taxon>Bacteria</taxon>
        <taxon>Bacillati</taxon>
        <taxon>Bacillota</taxon>
        <taxon>Bacilli</taxon>
        <taxon>Bacillales</taxon>
        <taxon>Bacillaceae</taxon>
        <taxon>Bacillus</taxon>
        <taxon>Bacillus cereus group</taxon>
    </lineage>
</organism>